<dbReference type="SMR" id="C0HLQ0"/>
<dbReference type="InterPro" id="IPR003854">
    <property type="entry name" value="GASA"/>
</dbReference>
<dbReference type="PANTHER" id="PTHR23201">
    <property type="entry name" value="EXTENSIN, PROLINE-RICH PROTEIN"/>
    <property type="match status" value="1"/>
</dbReference>
<dbReference type="PANTHER" id="PTHR23201:SF141">
    <property type="entry name" value="GIBBERELLIN-REGULATED PROTEIN 10"/>
    <property type="match status" value="1"/>
</dbReference>
<dbReference type="Pfam" id="PF02704">
    <property type="entry name" value="GASA"/>
    <property type="match status" value="1"/>
</dbReference>
<feature type="chain" id="PRO_0000451767" description="Cypmaclein">
    <location>
        <begin position="1"/>
        <end position="63"/>
    </location>
</feature>
<accession>C0HLQ0</accession>
<protein>
    <recommendedName>
        <fullName evidence="1">Cypmaclein</fullName>
    </recommendedName>
    <allergenName evidence="3">Jun a 7</allergenName>
</protein>
<organism>
    <name type="scientific">Juniperus ashei</name>
    <name type="common">Ozark white cedar</name>
    <dbReference type="NCBI Taxonomy" id="13101"/>
    <lineage>
        <taxon>Eukaryota</taxon>
        <taxon>Viridiplantae</taxon>
        <taxon>Streptophyta</taxon>
        <taxon>Embryophyta</taxon>
        <taxon>Tracheophyta</taxon>
        <taxon>Spermatophyta</taxon>
        <taxon>Pinopsida</taxon>
        <taxon>Pinidae</taxon>
        <taxon>Conifers II</taxon>
        <taxon>Cupressales</taxon>
        <taxon>Cupressaceae</taxon>
        <taxon>Juniperus</taxon>
    </lineage>
</organism>
<evidence type="ECO:0000250" key="1">
    <source>
        <dbReference type="UniProtKB" id="C0HLL6"/>
    </source>
</evidence>
<evidence type="ECO:0000269" key="2">
    <source>
    </source>
</evidence>
<evidence type="ECO:0000303" key="3">
    <source>
    </source>
</evidence>
<evidence type="ECO:0000305" key="4"/>
<sequence>AQIDCDKECNRRCSKASAHDRCLKYCGICCKKCHCVPPGTAGNEDVCPCYANLKNSKGGHKCP</sequence>
<reference evidence="4" key="1">
    <citation type="journal article" date="2020" name="Clin. Exp. Allergy">
        <title>Characterization of a 7 kDa pollen allergen belonging to the gibberellin-regulated protein family from three Cupressaceae species.</title>
        <authorList>
            <person name="Ehrenberg A.E."/>
            <person name="Klingebiel C."/>
            <person name="Oestling J."/>
            <person name="Larsson H."/>
            <person name="Mattsson L."/>
            <person name="Vitte J."/>
            <person name="Lidholm J."/>
        </authorList>
    </citation>
    <scope>PROTEIN SEQUENCE</scope>
    <scope>TISSUE SPECIFICITY</scope>
    <scope>MASS SPECTROMETRY</scope>
    <scope>ALLERGEN</scope>
    <source>
        <tissue evidence="3">Pollen</tissue>
    </source>
</reference>
<proteinExistence type="evidence at protein level"/>
<comment type="tissue specificity">
    <text evidence="2">Expressed in pollen (at protein level).</text>
</comment>
<comment type="mass spectrometry"/>
<comment type="allergen">
    <text evidence="2">Causes an allergic reaction in human. Binds to IgE of patients allergic to peach and sensitized to cypress pollen.</text>
</comment>
<comment type="similarity">
    <text evidence="4">Belongs to the GASA family.</text>
</comment>
<keyword id="KW-0020">Allergen</keyword>
<keyword id="KW-0903">Direct protein sequencing</keyword>
<name>CMLN_JUNAS</name>